<gene>
    <name evidence="1" type="primary">ypeA</name>
    <name type="ordered locus">SDY_2632</name>
</gene>
<feature type="chain" id="PRO_0000298446" description="Acetyltransferase YpeA">
    <location>
        <begin position="1"/>
        <end position="141"/>
    </location>
</feature>
<feature type="domain" description="N-acetyltransferase" evidence="1">
    <location>
        <begin position="1"/>
        <end position="141"/>
    </location>
</feature>
<sequence length="141" mass="16326">MEIRVFRQEDFEEVITLWERCDLLRPWNDPEMDIERKMNHDVSLFLVAEVNGEVVGTVMGGYDGHRGSAYYLGVHPEFRGRGIANALLNRLEKKLIARGCPKIQINVPEDNDMVLGMYERLGYEHADVLSLGKRLIEDEEY</sequence>
<keyword id="KW-0012">Acyltransferase</keyword>
<keyword id="KW-1185">Reference proteome</keyword>
<keyword id="KW-0808">Transferase</keyword>
<evidence type="ECO:0000255" key="1">
    <source>
        <dbReference type="HAMAP-Rule" id="MF_01127"/>
    </source>
</evidence>
<dbReference type="EC" id="2.3.1.-" evidence="1"/>
<dbReference type="EMBL" id="CP000034">
    <property type="protein sequence ID" value="ABB62686.1"/>
    <property type="molecule type" value="Genomic_DNA"/>
</dbReference>
<dbReference type="RefSeq" id="WP_000406000.1">
    <property type="nucleotide sequence ID" value="NC_007606.1"/>
</dbReference>
<dbReference type="RefSeq" id="YP_404177.2">
    <property type="nucleotide sequence ID" value="NC_007606.1"/>
</dbReference>
<dbReference type="SMR" id="Q32DB9"/>
<dbReference type="STRING" id="300267.SDY_2632"/>
<dbReference type="EnsemblBacteria" id="ABB62686">
    <property type="protein sequence ID" value="ABB62686"/>
    <property type="gene ID" value="SDY_2632"/>
</dbReference>
<dbReference type="KEGG" id="sdy:SDY_2632"/>
<dbReference type="PATRIC" id="fig|300267.13.peg.3170"/>
<dbReference type="HOGENOM" id="CLU_013985_34_1_6"/>
<dbReference type="Proteomes" id="UP000002716">
    <property type="component" value="Chromosome"/>
</dbReference>
<dbReference type="GO" id="GO:0016747">
    <property type="term" value="F:acyltransferase activity, transferring groups other than amino-acyl groups"/>
    <property type="evidence" value="ECO:0007669"/>
    <property type="project" value="UniProtKB-UniRule"/>
</dbReference>
<dbReference type="CDD" id="cd04301">
    <property type="entry name" value="NAT_SF"/>
    <property type="match status" value="1"/>
</dbReference>
<dbReference type="Gene3D" id="3.40.630.30">
    <property type="match status" value="1"/>
</dbReference>
<dbReference type="HAMAP" id="MF_01127">
    <property type="entry name" value="Acetyltransf_YpeA"/>
    <property type="match status" value="1"/>
</dbReference>
<dbReference type="InterPro" id="IPR023072">
    <property type="entry name" value="Acetyltransferase_YpeA"/>
</dbReference>
<dbReference type="InterPro" id="IPR016181">
    <property type="entry name" value="Acyl_CoA_acyltransferase"/>
</dbReference>
<dbReference type="InterPro" id="IPR050832">
    <property type="entry name" value="Bact_Acetyltransf"/>
</dbReference>
<dbReference type="InterPro" id="IPR000182">
    <property type="entry name" value="GNAT_dom"/>
</dbReference>
<dbReference type="NCBIfam" id="NF002959">
    <property type="entry name" value="PRK03624.1"/>
    <property type="match status" value="1"/>
</dbReference>
<dbReference type="PANTHER" id="PTHR43877">
    <property type="entry name" value="AMINOALKYLPHOSPHONATE N-ACETYLTRANSFERASE-RELATED-RELATED"/>
    <property type="match status" value="1"/>
</dbReference>
<dbReference type="Pfam" id="PF00583">
    <property type="entry name" value="Acetyltransf_1"/>
    <property type="match status" value="1"/>
</dbReference>
<dbReference type="SUPFAM" id="SSF55729">
    <property type="entry name" value="Acyl-CoA N-acyltransferases (Nat)"/>
    <property type="match status" value="1"/>
</dbReference>
<dbReference type="PROSITE" id="PS51186">
    <property type="entry name" value="GNAT"/>
    <property type="match status" value="1"/>
</dbReference>
<comment type="similarity">
    <text evidence="1">Belongs to the acetyltransferase family. YpeA subfamily.</text>
</comment>
<name>YPEA_SHIDS</name>
<accession>Q32DB9</accession>
<proteinExistence type="inferred from homology"/>
<protein>
    <recommendedName>
        <fullName evidence="1">Acetyltransferase YpeA</fullName>
        <ecNumber evidence="1">2.3.1.-</ecNumber>
    </recommendedName>
</protein>
<organism>
    <name type="scientific">Shigella dysenteriae serotype 1 (strain Sd197)</name>
    <dbReference type="NCBI Taxonomy" id="300267"/>
    <lineage>
        <taxon>Bacteria</taxon>
        <taxon>Pseudomonadati</taxon>
        <taxon>Pseudomonadota</taxon>
        <taxon>Gammaproteobacteria</taxon>
        <taxon>Enterobacterales</taxon>
        <taxon>Enterobacteriaceae</taxon>
        <taxon>Shigella</taxon>
    </lineage>
</organism>
<reference key="1">
    <citation type="journal article" date="2005" name="Nucleic Acids Res.">
        <title>Genome dynamics and diversity of Shigella species, the etiologic agents of bacillary dysentery.</title>
        <authorList>
            <person name="Yang F."/>
            <person name="Yang J."/>
            <person name="Zhang X."/>
            <person name="Chen L."/>
            <person name="Jiang Y."/>
            <person name="Yan Y."/>
            <person name="Tang X."/>
            <person name="Wang J."/>
            <person name="Xiong Z."/>
            <person name="Dong J."/>
            <person name="Xue Y."/>
            <person name="Zhu Y."/>
            <person name="Xu X."/>
            <person name="Sun L."/>
            <person name="Chen S."/>
            <person name="Nie H."/>
            <person name="Peng J."/>
            <person name="Xu J."/>
            <person name="Wang Y."/>
            <person name="Yuan Z."/>
            <person name="Wen Y."/>
            <person name="Yao Z."/>
            <person name="Shen Y."/>
            <person name="Qiang B."/>
            <person name="Hou Y."/>
            <person name="Yu J."/>
            <person name="Jin Q."/>
        </authorList>
    </citation>
    <scope>NUCLEOTIDE SEQUENCE [LARGE SCALE GENOMIC DNA]</scope>
    <source>
        <strain>Sd197</strain>
    </source>
</reference>